<protein>
    <recommendedName>
        <fullName evidence="1">Elongation factor 4</fullName>
        <shortName evidence="1">EF-4</shortName>
        <ecNumber evidence="1">3.6.5.n1</ecNumber>
    </recommendedName>
    <alternativeName>
        <fullName evidence="1">Ribosomal back-translocase LepA</fullName>
    </alternativeName>
</protein>
<feature type="chain" id="PRO_1000032023" description="Elongation factor 4">
    <location>
        <begin position="1"/>
        <end position="653"/>
    </location>
</feature>
<feature type="domain" description="tr-type G">
    <location>
        <begin position="50"/>
        <end position="231"/>
    </location>
</feature>
<feature type="region of interest" description="Disordered" evidence="2">
    <location>
        <begin position="1"/>
        <end position="30"/>
    </location>
</feature>
<feature type="binding site" evidence="1">
    <location>
        <begin position="62"/>
        <end position="67"/>
    </location>
    <ligand>
        <name>GTP</name>
        <dbReference type="ChEBI" id="CHEBI:37565"/>
    </ligand>
</feature>
<feature type="binding site" evidence="1">
    <location>
        <begin position="178"/>
        <end position="181"/>
    </location>
    <ligand>
        <name>GTP</name>
        <dbReference type="ChEBI" id="CHEBI:37565"/>
    </ligand>
</feature>
<organism>
    <name type="scientific">Mycobacterium tuberculosis (strain ATCC 25177 / H37Ra)</name>
    <dbReference type="NCBI Taxonomy" id="419947"/>
    <lineage>
        <taxon>Bacteria</taxon>
        <taxon>Bacillati</taxon>
        <taxon>Actinomycetota</taxon>
        <taxon>Actinomycetes</taxon>
        <taxon>Mycobacteriales</taxon>
        <taxon>Mycobacteriaceae</taxon>
        <taxon>Mycobacterium</taxon>
        <taxon>Mycobacterium tuberculosis complex</taxon>
    </lineage>
</organism>
<keyword id="KW-1003">Cell membrane</keyword>
<keyword id="KW-0342">GTP-binding</keyword>
<keyword id="KW-0378">Hydrolase</keyword>
<keyword id="KW-0472">Membrane</keyword>
<keyword id="KW-0547">Nucleotide-binding</keyword>
<keyword id="KW-0648">Protein biosynthesis</keyword>
<keyword id="KW-1185">Reference proteome</keyword>
<proteinExistence type="inferred from homology"/>
<reference key="1">
    <citation type="journal article" date="2008" name="PLoS ONE">
        <title>Genetic basis of virulence attenuation revealed by comparative genomic analysis of Mycobacterium tuberculosis strain H37Ra versus H37Rv.</title>
        <authorList>
            <person name="Zheng H."/>
            <person name="Lu L."/>
            <person name="Wang B."/>
            <person name="Pu S."/>
            <person name="Zhang X."/>
            <person name="Zhu G."/>
            <person name="Shi W."/>
            <person name="Zhang L."/>
            <person name="Wang H."/>
            <person name="Wang S."/>
            <person name="Zhao G."/>
            <person name="Zhang Y."/>
        </authorList>
    </citation>
    <scope>NUCLEOTIDE SEQUENCE [LARGE SCALE GENOMIC DNA]</scope>
    <source>
        <strain>ATCC 25177 / H37Ra</strain>
    </source>
</reference>
<accession>A5U598</accession>
<evidence type="ECO:0000255" key="1">
    <source>
        <dbReference type="HAMAP-Rule" id="MF_00071"/>
    </source>
</evidence>
<evidence type="ECO:0000256" key="2">
    <source>
        <dbReference type="SAM" id="MobiDB-lite"/>
    </source>
</evidence>
<sequence length="653" mass="72396">MRTPCSQHRRDRPSAIGSQLPDADTLDTRQPPLQEIPISSFADKTFTAPAQIRNFCIIAHIDHGKSTLADRMLQLTGVVDERSMRAQYLDRMDIERERGITIKAQNVRLPWRVDKTDYVLHLIDTPGHVDFTYEVSRALEACEGAVLLVDAAQGIEAQTLANLYLALDRDLHIIPVLNKIDLPAADPDRYAAEMAHIIGCEPAEVLRVSGKTGEGVSDLLDEVVRQVPPPQGDAEAPTRAMIFDSVYDIYRGVVTYVRVVDGKISPRERIMMMSTGATHELLEVGIVSPEPKPCEGLGVGEVGYLITGVKDVRQSKVGDTVTSLSRARGAAAEALTGYREPKPMVYSGLYPVDGSDYPNLRDALDKLQLNDAALTYEPETSVALGFGFRCGFLGLLHMEITRERLEREFGLDLISTSPNVVYRVHKDDGTEIRVTNPSDWPEGKIRTVYEPVVKTTIIAPSEFIGTIMELCQSRRGELGGMDYLSPERVELRYTMPLGEIIFDFFDALKSRTRGYASLDYEEAGEQEAALVKVDILLQGEAVDAFSAIVHKDTAYAYGNKMTTKLKELIPRQQFEVPVQAAIGSKIIARENIRAIRKDVLSKCYGGDITRKRKLLEKQKEGKKRMKTIGRVEVPQEAFVAALSTDAAGDKGKK</sequence>
<gene>
    <name evidence="1" type="primary">lepA</name>
    <name type="ordered locus">MRA_2428</name>
</gene>
<dbReference type="EC" id="3.6.5.n1" evidence="1"/>
<dbReference type="EMBL" id="CP000611">
    <property type="protein sequence ID" value="ABQ74198.1"/>
    <property type="molecule type" value="Genomic_DNA"/>
</dbReference>
<dbReference type="RefSeq" id="WP_003900516.1">
    <property type="nucleotide sequence ID" value="NZ_CP016972.1"/>
</dbReference>
<dbReference type="SMR" id="A5U598"/>
<dbReference type="GeneID" id="45426394"/>
<dbReference type="KEGG" id="mra:MRA_2428"/>
<dbReference type="eggNOG" id="COG0481">
    <property type="taxonomic scope" value="Bacteria"/>
</dbReference>
<dbReference type="HOGENOM" id="CLU_009995_3_3_11"/>
<dbReference type="Proteomes" id="UP000001988">
    <property type="component" value="Chromosome"/>
</dbReference>
<dbReference type="GO" id="GO:0005886">
    <property type="term" value="C:plasma membrane"/>
    <property type="evidence" value="ECO:0007669"/>
    <property type="project" value="UniProtKB-SubCell"/>
</dbReference>
<dbReference type="GO" id="GO:0005525">
    <property type="term" value="F:GTP binding"/>
    <property type="evidence" value="ECO:0007669"/>
    <property type="project" value="UniProtKB-UniRule"/>
</dbReference>
<dbReference type="GO" id="GO:0003924">
    <property type="term" value="F:GTPase activity"/>
    <property type="evidence" value="ECO:0007669"/>
    <property type="project" value="UniProtKB-UniRule"/>
</dbReference>
<dbReference type="GO" id="GO:0043022">
    <property type="term" value="F:ribosome binding"/>
    <property type="evidence" value="ECO:0007669"/>
    <property type="project" value="UniProtKB-UniRule"/>
</dbReference>
<dbReference type="GO" id="GO:0003746">
    <property type="term" value="F:translation elongation factor activity"/>
    <property type="evidence" value="ECO:0007669"/>
    <property type="project" value="UniProtKB-UniRule"/>
</dbReference>
<dbReference type="GO" id="GO:0045727">
    <property type="term" value="P:positive regulation of translation"/>
    <property type="evidence" value="ECO:0007669"/>
    <property type="project" value="UniProtKB-UniRule"/>
</dbReference>
<dbReference type="CDD" id="cd03699">
    <property type="entry name" value="EF4_II"/>
    <property type="match status" value="1"/>
</dbReference>
<dbReference type="CDD" id="cd16260">
    <property type="entry name" value="EF4_III"/>
    <property type="match status" value="1"/>
</dbReference>
<dbReference type="CDD" id="cd01890">
    <property type="entry name" value="LepA"/>
    <property type="match status" value="1"/>
</dbReference>
<dbReference type="CDD" id="cd03709">
    <property type="entry name" value="lepA_C"/>
    <property type="match status" value="1"/>
</dbReference>
<dbReference type="FunFam" id="3.30.70.240:FF:000011">
    <property type="entry name" value="Elongation factor 4"/>
    <property type="match status" value="1"/>
</dbReference>
<dbReference type="FunFam" id="3.40.50.300:FF:000078">
    <property type="entry name" value="Elongation factor 4"/>
    <property type="match status" value="1"/>
</dbReference>
<dbReference type="FunFam" id="2.40.30.10:FF:000015">
    <property type="entry name" value="Translation factor GUF1, mitochondrial"/>
    <property type="match status" value="1"/>
</dbReference>
<dbReference type="FunFam" id="3.30.70.2570:FF:000001">
    <property type="entry name" value="Translation factor GUF1, mitochondrial"/>
    <property type="match status" value="1"/>
</dbReference>
<dbReference type="FunFam" id="3.30.70.870:FF:000004">
    <property type="entry name" value="Translation factor GUF1, mitochondrial"/>
    <property type="match status" value="1"/>
</dbReference>
<dbReference type="Gene3D" id="3.30.70.240">
    <property type="match status" value="1"/>
</dbReference>
<dbReference type="Gene3D" id="3.30.70.2570">
    <property type="entry name" value="Elongation factor 4, C-terminal domain"/>
    <property type="match status" value="1"/>
</dbReference>
<dbReference type="Gene3D" id="3.30.70.870">
    <property type="entry name" value="Elongation Factor G (Translational Gtpase), domain 3"/>
    <property type="match status" value="1"/>
</dbReference>
<dbReference type="Gene3D" id="3.40.50.300">
    <property type="entry name" value="P-loop containing nucleotide triphosphate hydrolases"/>
    <property type="match status" value="1"/>
</dbReference>
<dbReference type="Gene3D" id="2.40.30.10">
    <property type="entry name" value="Translation factors"/>
    <property type="match status" value="1"/>
</dbReference>
<dbReference type="HAMAP" id="MF_00071">
    <property type="entry name" value="LepA"/>
    <property type="match status" value="1"/>
</dbReference>
<dbReference type="InterPro" id="IPR006297">
    <property type="entry name" value="EF-4"/>
</dbReference>
<dbReference type="InterPro" id="IPR035647">
    <property type="entry name" value="EFG_III/V"/>
</dbReference>
<dbReference type="InterPro" id="IPR000640">
    <property type="entry name" value="EFG_V-like"/>
</dbReference>
<dbReference type="InterPro" id="IPR004161">
    <property type="entry name" value="EFTu-like_2"/>
</dbReference>
<dbReference type="InterPro" id="IPR031157">
    <property type="entry name" value="G_TR_CS"/>
</dbReference>
<dbReference type="InterPro" id="IPR038363">
    <property type="entry name" value="LepA_C_sf"/>
</dbReference>
<dbReference type="InterPro" id="IPR013842">
    <property type="entry name" value="LepA_CTD"/>
</dbReference>
<dbReference type="InterPro" id="IPR035654">
    <property type="entry name" value="LepA_IV"/>
</dbReference>
<dbReference type="InterPro" id="IPR027417">
    <property type="entry name" value="P-loop_NTPase"/>
</dbReference>
<dbReference type="InterPro" id="IPR005225">
    <property type="entry name" value="Small_GTP-bd"/>
</dbReference>
<dbReference type="InterPro" id="IPR000795">
    <property type="entry name" value="T_Tr_GTP-bd_dom"/>
</dbReference>
<dbReference type="InterPro" id="IPR009000">
    <property type="entry name" value="Transl_B-barrel_sf"/>
</dbReference>
<dbReference type="NCBIfam" id="TIGR01393">
    <property type="entry name" value="lepA"/>
    <property type="match status" value="1"/>
</dbReference>
<dbReference type="NCBIfam" id="TIGR00231">
    <property type="entry name" value="small_GTP"/>
    <property type="match status" value="1"/>
</dbReference>
<dbReference type="PANTHER" id="PTHR43512:SF4">
    <property type="entry name" value="TRANSLATION FACTOR GUF1 HOMOLOG, CHLOROPLASTIC"/>
    <property type="match status" value="1"/>
</dbReference>
<dbReference type="PANTHER" id="PTHR43512">
    <property type="entry name" value="TRANSLATION FACTOR GUF1-RELATED"/>
    <property type="match status" value="1"/>
</dbReference>
<dbReference type="Pfam" id="PF00679">
    <property type="entry name" value="EFG_C"/>
    <property type="match status" value="1"/>
</dbReference>
<dbReference type="Pfam" id="PF00009">
    <property type="entry name" value="GTP_EFTU"/>
    <property type="match status" value="1"/>
</dbReference>
<dbReference type="Pfam" id="PF03144">
    <property type="entry name" value="GTP_EFTU_D2"/>
    <property type="match status" value="1"/>
</dbReference>
<dbReference type="Pfam" id="PF06421">
    <property type="entry name" value="LepA_C"/>
    <property type="match status" value="1"/>
</dbReference>
<dbReference type="PRINTS" id="PR00315">
    <property type="entry name" value="ELONGATNFCT"/>
</dbReference>
<dbReference type="SMART" id="SM00838">
    <property type="entry name" value="EFG_C"/>
    <property type="match status" value="1"/>
</dbReference>
<dbReference type="SUPFAM" id="SSF54980">
    <property type="entry name" value="EF-G C-terminal domain-like"/>
    <property type="match status" value="2"/>
</dbReference>
<dbReference type="SUPFAM" id="SSF52540">
    <property type="entry name" value="P-loop containing nucleoside triphosphate hydrolases"/>
    <property type="match status" value="1"/>
</dbReference>
<dbReference type="SUPFAM" id="SSF50447">
    <property type="entry name" value="Translation proteins"/>
    <property type="match status" value="1"/>
</dbReference>
<dbReference type="PROSITE" id="PS00301">
    <property type="entry name" value="G_TR_1"/>
    <property type="match status" value="1"/>
</dbReference>
<dbReference type="PROSITE" id="PS51722">
    <property type="entry name" value="G_TR_2"/>
    <property type="match status" value="1"/>
</dbReference>
<comment type="function">
    <text evidence="1">Required for accurate and efficient protein synthesis under certain stress conditions. May act as a fidelity factor of the translation reaction, by catalyzing a one-codon backward translocation of tRNAs on improperly translocated ribosomes. Back-translocation proceeds from a post-translocation (POST) complex to a pre-translocation (PRE) complex, thus giving elongation factor G a second chance to translocate the tRNAs correctly. Binds to ribosomes in a GTP-dependent manner.</text>
</comment>
<comment type="catalytic activity">
    <reaction evidence="1">
        <text>GTP + H2O = GDP + phosphate + H(+)</text>
        <dbReference type="Rhea" id="RHEA:19669"/>
        <dbReference type="ChEBI" id="CHEBI:15377"/>
        <dbReference type="ChEBI" id="CHEBI:15378"/>
        <dbReference type="ChEBI" id="CHEBI:37565"/>
        <dbReference type="ChEBI" id="CHEBI:43474"/>
        <dbReference type="ChEBI" id="CHEBI:58189"/>
        <dbReference type="EC" id="3.6.5.n1"/>
    </reaction>
</comment>
<comment type="subcellular location">
    <subcellularLocation>
        <location evidence="1">Cell membrane</location>
        <topology evidence="1">Peripheral membrane protein</topology>
        <orientation evidence="1">Cytoplasmic side</orientation>
    </subcellularLocation>
</comment>
<comment type="similarity">
    <text evidence="1">Belongs to the TRAFAC class translation factor GTPase superfamily. Classic translation factor GTPase family. LepA subfamily.</text>
</comment>
<name>LEPA_MYCTA</name>